<dbReference type="EMBL" id="HQ168023">
    <property type="protein sequence ID" value="AEM43051.1"/>
    <property type="molecule type" value="mRNA"/>
</dbReference>
<dbReference type="GO" id="GO:0005576">
    <property type="term" value="C:extracellular region"/>
    <property type="evidence" value="ECO:0007669"/>
    <property type="project" value="UniProtKB-SubCell"/>
</dbReference>
<dbReference type="GO" id="GO:0016020">
    <property type="term" value="C:membrane"/>
    <property type="evidence" value="ECO:0007669"/>
    <property type="project" value="UniProtKB-KW"/>
</dbReference>
<dbReference type="GO" id="GO:0044218">
    <property type="term" value="C:other organism cell membrane"/>
    <property type="evidence" value="ECO:0007669"/>
    <property type="project" value="UniProtKB-KW"/>
</dbReference>
<dbReference type="GO" id="GO:0090729">
    <property type="term" value="F:toxin activity"/>
    <property type="evidence" value="ECO:0007669"/>
    <property type="project" value="UniProtKB-KW"/>
</dbReference>
<dbReference type="GO" id="GO:0042742">
    <property type="term" value="P:defense response to bacterium"/>
    <property type="evidence" value="ECO:0007669"/>
    <property type="project" value="UniProtKB-KW"/>
</dbReference>
<dbReference type="GO" id="GO:0045087">
    <property type="term" value="P:innate immune response"/>
    <property type="evidence" value="ECO:0007669"/>
    <property type="project" value="UniProtKB-KW"/>
</dbReference>
<dbReference type="InterPro" id="IPR013213">
    <property type="entry name" value="Mastoparan"/>
</dbReference>
<dbReference type="Pfam" id="PF08249">
    <property type="entry name" value="Mastoparan"/>
    <property type="match status" value="1"/>
</dbReference>
<sequence>MKNTILILFTAFIALLGFFGMSAEALADPVADPLAGPNAEADPEAINWKGIAAMAKKLLG</sequence>
<organism>
    <name type="scientific">Vespa velutina flavitarsus</name>
    <name type="common">Asian hornet</name>
    <dbReference type="NCBI Taxonomy" id="1075777"/>
    <lineage>
        <taxon>Eukaryota</taxon>
        <taxon>Metazoa</taxon>
        <taxon>Ecdysozoa</taxon>
        <taxon>Arthropoda</taxon>
        <taxon>Hexapoda</taxon>
        <taxon>Insecta</taxon>
        <taxon>Pterygota</taxon>
        <taxon>Neoptera</taxon>
        <taxon>Endopterygota</taxon>
        <taxon>Hymenoptera</taxon>
        <taxon>Apocrita</taxon>
        <taxon>Aculeata</taxon>
        <taxon>Vespoidea</taxon>
        <taxon>Vespidae</taxon>
        <taxon>Vespinae</taxon>
        <taxon>Vespa</taxon>
    </lineage>
</organism>
<keyword id="KW-0027">Amidation</keyword>
<keyword id="KW-0044">Antibiotic</keyword>
<keyword id="KW-0929">Antimicrobial</keyword>
<keyword id="KW-1213">G-protein coupled receptor impairing toxin</keyword>
<keyword id="KW-0391">Immunity</keyword>
<keyword id="KW-0399">Innate immunity</keyword>
<keyword id="KW-0467">Mast cell degranulation</keyword>
<keyword id="KW-0472">Membrane</keyword>
<keyword id="KW-0677">Repeat</keyword>
<keyword id="KW-0964">Secreted</keyword>
<keyword id="KW-0732">Signal</keyword>
<keyword id="KW-1052">Target cell membrane</keyword>
<keyword id="KW-1053">Target membrane</keyword>
<keyword id="KW-0800">Toxin</keyword>
<feature type="signal peptide" evidence="3">
    <location>
        <begin position="1"/>
        <end position="27"/>
    </location>
</feature>
<feature type="propeptide" id="PRO_0000458812" evidence="7">
    <location>
        <begin position="28"/>
        <end position="45"/>
    </location>
</feature>
<feature type="peptide" id="PRO_5004522912" description="Mastoparan-V" evidence="7">
    <location>
        <begin position="46"/>
        <end position="59"/>
    </location>
</feature>
<feature type="repeat" description="AXPX 1" evidence="6">
    <location>
        <begin position="27"/>
        <end position="30"/>
    </location>
</feature>
<feature type="repeat" description="AXPX 2" evidence="6">
    <location>
        <begin position="31"/>
        <end position="34"/>
    </location>
</feature>
<feature type="repeat" description="AXPX 3" evidence="6">
    <location>
        <begin position="35"/>
        <end position="38"/>
    </location>
</feature>
<feature type="repeat" description="AXPX 4" evidence="6">
    <location>
        <begin position="41"/>
        <end position="44"/>
    </location>
</feature>
<feature type="modified residue" description="Leucine amide" evidence="7">
    <location>
        <position position="59"/>
    </location>
</feature>
<comment type="function">
    <text evidence="1 2 4">Antimicrobial and mast cell degranulating peptide. Has broad spectrum antibacterial activity against both Gram-positive and Gram-negative bacteria (S.aureus MIC=32-64 ug/ml, S.xylosus MIC=3 ug/ml, S.alactolyticus MIC=16 ug/ml, C.koseri MIC=4 ug/ml, E.coli MIC=8 ug/ml, K.pneumoniae MIC=64 ug/ml, P.aerugiosa MIC=256 ug/ml, S.choleraesuis MIC=32 ug/ml, S.typhimurium MIC=32 ug/ml, V.parahamelytics MIC=32 ug/ml). Affects membrane permeability of E.coli. Shows hemolytic activities on sheep, chicken and human erythrocytes (PubMed:21884742). Its mast cell degranulation activity may be related to the activation of G-protein coupled receptors in mast cells as well as interaction with other proteins located in cell endosomal membranes in the mast cells (By similarity).</text>
</comment>
<comment type="subcellular location">
    <subcellularLocation>
        <location evidence="7">Secreted</location>
    </subcellularLocation>
    <subcellularLocation>
        <location evidence="6">Target cell membrane</location>
    </subcellularLocation>
    <text evidence="7">Assumes an amphipathic alpha-helical conformation in a membrane-like environment.</text>
</comment>
<comment type="tissue specificity">
    <text evidence="7">Expressed by the venom gland.</text>
</comment>
<comment type="similarity">
    <text evidence="6">Belongs to the MCD family. Mastoparan subfamily.</text>
</comment>
<protein>
    <recommendedName>
        <fullName evidence="5">Mastoparan-V</fullName>
        <shortName evidence="5">MP-V</shortName>
    </recommendedName>
</protein>
<reference evidence="8" key="1">
    <citation type="journal article" date="2011" name="Peptides">
        <title>Structural and biological characterization of mastoparans in the venom of Vespa species in Taiwan.</title>
        <authorList>
            <person name="Lin C.H."/>
            <person name="Tzen J.T."/>
            <person name="Shyu C.L."/>
            <person name="Yang M.J."/>
            <person name="Tu W.C."/>
        </authorList>
    </citation>
    <scope>NUCLEOTIDE SEQUENCE [MRNA]</scope>
    <scope>FUNCTION</scope>
    <scope>PROBABLE AMIDATION AT LEU-59</scope>
    <scope>SYNTHESIS OF 46-59</scope>
    <source>
        <tissue>Venom gland</tissue>
    </source>
</reference>
<accession>S4S3F6</accession>
<evidence type="ECO:0000250" key="1">
    <source>
        <dbReference type="UniProtKB" id="P01514"/>
    </source>
</evidence>
<evidence type="ECO:0000250" key="2">
    <source>
        <dbReference type="UniProtKB" id="P84914"/>
    </source>
</evidence>
<evidence type="ECO:0000255" key="3"/>
<evidence type="ECO:0000269" key="4">
    <source>
    </source>
</evidence>
<evidence type="ECO:0000303" key="5">
    <source>
    </source>
</evidence>
<evidence type="ECO:0000305" key="6"/>
<evidence type="ECO:0000305" key="7">
    <source>
    </source>
</evidence>
<evidence type="ECO:0000312" key="8">
    <source>
        <dbReference type="EMBL" id="AEM43051.1"/>
    </source>
</evidence>
<name>MAST_VESVF</name>
<proteinExistence type="evidence at protein level"/>